<feature type="chain" id="PRO_0000135185" description="Signal recognition particle 9 kDa protein">
    <location>
        <begin position="1"/>
        <end position="77"/>
    </location>
</feature>
<sequence length="77" mass="8974">MVFVKNWDDFEIAVENMYLANPQNCRLTMKYAHSKGHILLKMTDNVKCVQYKAENMPDLRKIEKITSNLVGHMASKE</sequence>
<gene>
    <name type="primary">Srp9</name>
    <name type="ORF">CG8268</name>
</gene>
<comment type="function">
    <text evidence="2">Component of the signal recognition particle (SRP) complex, a ribonucleoprotein complex that mediates the cotranslational targeting of secretory and membrane proteins to the endoplasmic reticulum (ER) (By similarity). SRP9 together with Srp14 and the Alu portion of the SRP RNA, constitutes the elongation arrest domain of SRP (By similarity). The complex of Srp9 and Srp14 is required for SRP RNA binding (By similarity).</text>
</comment>
<comment type="subunit">
    <text evidence="2 3">Heterodimer with Srp14; binds RNA as heterodimer (By similarity). Component of a signal recognition particle complex that consists of a 7SL RNA molecule and six protein subunits: Srp72, Srp68, Srp54, Srp19, Srp14 and Srp9 (By similarity).</text>
</comment>
<comment type="interaction">
    <interactant intactId="EBI-100633">
        <id>Q9VSC1</id>
    </interactant>
    <interactant intactId="EBI-26706929">
        <id>Q9VDL0</id>
        <label>Srp14</label>
    </interactant>
    <organismsDiffer>false</organismsDiffer>
    <experiments>3</experiments>
</comment>
<comment type="subcellular location">
    <subcellularLocation>
        <location evidence="1">Cytoplasm</location>
    </subcellularLocation>
</comment>
<comment type="similarity">
    <text evidence="4">Belongs to the SRP9 family.</text>
</comment>
<accession>Q9VSC1</accession>
<reference key="1">
    <citation type="journal article" date="2000" name="Science">
        <title>The genome sequence of Drosophila melanogaster.</title>
        <authorList>
            <person name="Adams M.D."/>
            <person name="Celniker S.E."/>
            <person name="Holt R.A."/>
            <person name="Evans C.A."/>
            <person name="Gocayne J.D."/>
            <person name="Amanatides P.G."/>
            <person name="Scherer S.E."/>
            <person name="Li P.W."/>
            <person name="Hoskins R.A."/>
            <person name="Galle R.F."/>
            <person name="George R.A."/>
            <person name="Lewis S.E."/>
            <person name="Richards S."/>
            <person name="Ashburner M."/>
            <person name="Henderson S.N."/>
            <person name="Sutton G.G."/>
            <person name="Wortman J.R."/>
            <person name="Yandell M.D."/>
            <person name="Zhang Q."/>
            <person name="Chen L.X."/>
            <person name="Brandon R.C."/>
            <person name="Rogers Y.-H.C."/>
            <person name="Blazej R.G."/>
            <person name="Champe M."/>
            <person name="Pfeiffer B.D."/>
            <person name="Wan K.H."/>
            <person name="Doyle C."/>
            <person name="Baxter E.G."/>
            <person name="Helt G."/>
            <person name="Nelson C.R."/>
            <person name="Miklos G.L.G."/>
            <person name="Abril J.F."/>
            <person name="Agbayani A."/>
            <person name="An H.-J."/>
            <person name="Andrews-Pfannkoch C."/>
            <person name="Baldwin D."/>
            <person name="Ballew R.M."/>
            <person name="Basu A."/>
            <person name="Baxendale J."/>
            <person name="Bayraktaroglu L."/>
            <person name="Beasley E.M."/>
            <person name="Beeson K.Y."/>
            <person name="Benos P.V."/>
            <person name="Berman B.P."/>
            <person name="Bhandari D."/>
            <person name="Bolshakov S."/>
            <person name="Borkova D."/>
            <person name="Botchan M.R."/>
            <person name="Bouck J."/>
            <person name="Brokstein P."/>
            <person name="Brottier P."/>
            <person name="Burtis K.C."/>
            <person name="Busam D.A."/>
            <person name="Butler H."/>
            <person name="Cadieu E."/>
            <person name="Center A."/>
            <person name="Chandra I."/>
            <person name="Cherry J.M."/>
            <person name="Cawley S."/>
            <person name="Dahlke C."/>
            <person name="Davenport L.B."/>
            <person name="Davies P."/>
            <person name="de Pablos B."/>
            <person name="Delcher A."/>
            <person name="Deng Z."/>
            <person name="Mays A.D."/>
            <person name="Dew I."/>
            <person name="Dietz S.M."/>
            <person name="Dodson K."/>
            <person name="Doup L.E."/>
            <person name="Downes M."/>
            <person name="Dugan-Rocha S."/>
            <person name="Dunkov B.C."/>
            <person name="Dunn P."/>
            <person name="Durbin K.J."/>
            <person name="Evangelista C.C."/>
            <person name="Ferraz C."/>
            <person name="Ferriera S."/>
            <person name="Fleischmann W."/>
            <person name="Fosler C."/>
            <person name="Gabrielian A.E."/>
            <person name="Garg N.S."/>
            <person name="Gelbart W.M."/>
            <person name="Glasser K."/>
            <person name="Glodek A."/>
            <person name="Gong F."/>
            <person name="Gorrell J.H."/>
            <person name="Gu Z."/>
            <person name="Guan P."/>
            <person name="Harris M."/>
            <person name="Harris N.L."/>
            <person name="Harvey D.A."/>
            <person name="Heiman T.J."/>
            <person name="Hernandez J.R."/>
            <person name="Houck J."/>
            <person name="Hostin D."/>
            <person name="Houston K.A."/>
            <person name="Howland T.J."/>
            <person name="Wei M.-H."/>
            <person name="Ibegwam C."/>
            <person name="Jalali M."/>
            <person name="Kalush F."/>
            <person name="Karpen G.H."/>
            <person name="Ke Z."/>
            <person name="Kennison J.A."/>
            <person name="Ketchum K.A."/>
            <person name="Kimmel B.E."/>
            <person name="Kodira C.D."/>
            <person name="Kraft C.L."/>
            <person name="Kravitz S."/>
            <person name="Kulp D."/>
            <person name="Lai Z."/>
            <person name="Lasko P."/>
            <person name="Lei Y."/>
            <person name="Levitsky A.A."/>
            <person name="Li J.H."/>
            <person name="Li Z."/>
            <person name="Liang Y."/>
            <person name="Lin X."/>
            <person name="Liu X."/>
            <person name="Mattei B."/>
            <person name="McIntosh T.C."/>
            <person name="McLeod M.P."/>
            <person name="McPherson D."/>
            <person name="Merkulov G."/>
            <person name="Milshina N.V."/>
            <person name="Mobarry C."/>
            <person name="Morris J."/>
            <person name="Moshrefi A."/>
            <person name="Mount S.M."/>
            <person name="Moy M."/>
            <person name="Murphy B."/>
            <person name="Murphy L."/>
            <person name="Muzny D.M."/>
            <person name="Nelson D.L."/>
            <person name="Nelson D.R."/>
            <person name="Nelson K.A."/>
            <person name="Nixon K."/>
            <person name="Nusskern D.R."/>
            <person name="Pacleb J.M."/>
            <person name="Palazzolo M."/>
            <person name="Pittman G.S."/>
            <person name="Pan S."/>
            <person name="Pollard J."/>
            <person name="Puri V."/>
            <person name="Reese M.G."/>
            <person name="Reinert K."/>
            <person name="Remington K."/>
            <person name="Saunders R.D.C."/>
            <person name="Scheeler F."/>
            <person name="Shen H."/>
            <person name="Shue B.C."/>
            <person name="Siden-Kiamos I."/>
            <person name="Simpson M."/>
            <person name="Skupski M.P."/>
            <person name="Smith T.J."/>
            <person name="Spier E."/>
            <person name="Spradling A.C."/>
            <person name="Stapleton M."/>
            <person name="Strong R."/>
            <person name="Sun E."/>
            <person name="Svirskas R."/>
            <person name="Tector C."/>
            <person name="Turner R."/>
            <person name="Venter E."/>
            <person name="Wang A.H."/>
            <person name="Wang X."/>
            <person name="Wang Z.-Y."/>
            <person name="Wassarman D.A."/>
            <person name="Weinstock G.M."/>
            <person name="Weissenbach J."/>
            <person name="Williams S.M."/>
            <person name="Woodage T."/>
            <person name="Worley K.C."/>
            <person name="Wu D."/>
            <person name="Yang S."/>
            <person name="Yao Q.A."/>
            <person name="Ye J."/>
            <person name="Yeh R.-F."/>
            <person name="Zaveri J.S."/>
            <person name="Zhan M."/>
            <person name="Zhang G."/>
            <person name="Zhao Q."/>
            <person name="Zheng L."/>
            <person name="Zheng X.H."/>
            <person name="Zhong F.N."/>
            <person name="Zhong W."/>
            <person name="Zhou X."/>
            <person name="Zhu S.C."/>
            <person name="Zhu X."/>
            <person name="Smith H.O."/>
            <person name="Gibbs R.A."/>
            <person name="Myers E.W."/>
            <person name="Rubin G.M."/>
            <person name="Venter J.C."/>
        </authorList>
    </citation>
    <scope>NUCLEOTIDE SEQUENCE [LARGE SCALE GENOMIC DNA]</scope>
    <source>
        <strain>Berkeley</strain>
    </source>
</reference>
<reference key="2">
    <citation type="journal article" date="2002" name="Genome Biol.">
        <title>Annotation of the Drosophila melanogaster euchromatic genome: a systematic review.</title>
        <authorList>
            <person name="Misra S."/>
            <person name="Crosby M.A."/>
            <person name="Mungall C.J."/>
            <person name="Matthews B.B."/>
            <person name="Campbell K.S."/>
            <person name="Hradecky P."/>
            <person name="Huang Y."/>
            <person name="Kaminker J.S."/>
            <person name="Millburn G.H."/>
            <person name="Prochnik S.E."/>
            <person name="Smith C.D."/>
            <person name="Tupy J.L."/>
            <person name="Whitfield E.J."/>
            <person name="Bayraktaroglu L."/>
            <person name="Berman B.P."/>
            <person name="Bettencourt B.R."/>
            <person name="Celniker S.E."/>
            <person name="de Grey A.D.N.J."/>
            <person name="Drysdale R.A."/>
            <person name="Harris N.L."/>
            <person name="Richter J."/>
            <person name="Russo S."/>
            <person name="Schroeder A.J."/>
            <person name="Shu S.Q."/>
            <person name="Stapleton M."/>
            <person name="Yamada C."/>
            <person name="Ashburner M."/>
            <person name="Gelbart W.M."/>
            <person name="Rubin G.M."/>
            <person name="Lewis S.E."/>
        </authorList>
    </citation>
    <scope>GENOME REANNOTATION</scope>
    <source>
        <strain>Berkeley</strain>
    </source>
</reference>
<reference key="3">
    <citation type="journal article" date="2002" name="Genome Biol.">
        <title>A Drosophila full-length cDNA resource.</title>
        <authorList>
            <person name="Stapleton M."/>
            <person name="Carlson J.W."/>
            <person name="Brokstein P."/>
            <person name="Yu C."/>
            <person name="Champe M."/>
            <person name="George R.A."/>
            <person name="Guarin H."/>
            <person name="Kronmiller B."/>
            <person name="Pacleb J.M."/>
            <person name="Park S."/>
            <person name="Wan K.H."/>
            <person name="Rubin G.M."/>
            <person name="Celniker S.E."/>
        </authorList>
    </citation>
    <scope>NUCLEOTIDE SEQUENCE [LARGE SCALE MRNA]</scope>
    <source>
        <strain>Berkeley</strain>
        <tissue>Embryo</tissue>
    </source>
</reference>
<reference key="4">
    <citation type="journal article" date="2005" name="Development">
        <title>CrebA regulates secretory activity in the Drosophila salivary gland and epidermis.</title>
        <authorList>
            <person name="Abrams E.W."/>
            <person name="Andrew D.J."/>
        </authorList>
    </citation>
    <scope>IDENTIFICATION</scope>
</reference>
<proteinExistence type="evidence at protein level"/>
<dbReference type="EMBL" id="AE014296">
    <property type="protein sequence ID" value="AAF50504.1"/>
    <property type="molecule type" value="Genomic_DNA"/>
</dbReference>
<dbReference type="EMBL" id="AY071180">
    <property type="protein sequence ID" value="AAL48802.1"/>
    <property type="molecule type" value="mRNA"/>
</dbReference>
<dbReference type="RefSeq" id="NP_648163.1">
    <property type="nucleotide sequence ID" value="NM_139906.3"/>
</dbReference>
<dbReference type="SMR" id="Q9VSC1"/>
<dbReference type="BioGRID" id="64309">
    <property type="interactions" value="6"/>
</dbReference>
<dbReference type="ComplexPortal" id="CPX-2657">
    <property type="entry name" value="Signal recognition particle"/>
</dbReference>
<dbReference type="DIP" id="DIP-18881N"/>
<dbReference type="FunCoup" id="Q9VSC1">
    <property type="interactions" value="1312"/>
</dbReference>
<dbReference type="IntAct" id="Q9VSC1">
    <property type="interactions" value="5"/>
</dbReference>
<dbReference type="STRING" id="7227.FBpp0076467"/>
<dbReference type="PaxDb" id="7227-FBpp0076467"/>
<dbReference type="DNASU" id="38883"/>
<dbReference type="EnsemblMetazoa" id="FBtr0076750">
    <property type="protein sequence ID" value="FBpp0076467"/>
    <property type="gene ID" value="FBgn0035827"/>
</dbReference>
<dbReference type="GeneID" id="38883"/>
<dbReference type="KEGG" id="dme:Dmel_CG8268"/>
<dbReference type="UCSC" id="CG8268-RA">
    <property type="organism name" value="d. melanogaster"/>
</dbReference>
<dbReference type="AGR" id="FB:FBgn0035827"/>
<dbReference type="CTD" id="6726"/>
<dbReference type="FlyBase" id="FBgn0035827">
    <property type="gene designation" value="Srp9"/>
</dbReference>
<dbReference type="VEuPathDB" id="VectorBase:FBgn0035827"/>
<dbReference type="eggNOG" id="KOG3465">
    <property type="taxonomic scope" value="Eukaryota"/>
</dbReference>
<dbReference type="GeneTree" id="ENSGT00390000018505"/>
<dbReference type="HOGENOM" id="CLU_144337_3_0_1"/>
<dbReference type="InParanoid" id="Q9VSC1"/>
<dbReference type="OMA" id="DPMKVRF"/>
<dbReference type="OrthoDB" id="360923at2759"/>
<dbReference type="PhylomeDB" id="Q9VSC1"/>
<dbReference type="Reactome" id="R-DME-1799339">
    <property type="pathway name" value="SRP-dependent cotranslational protein targeting to membrane"/>
</dbReference>
<dbReference type="BioGRID-ORCS" id="38883">
    <property type="hits" value="0 hits in 1 CRISPR screen"/>
</dbReference>
<dbReference type="GenomeRNAi" id="38883"/>
<dbReference type="PRO" id="PR:Q9VSC1"/>
<dbReference type="Proteomes" id="UP000000803">
    <property type="component" value="Chromosome 3L"/>
</dbReference>
<dbReference type="Bgee" id="FBgn0035827">
    <property type="expression patterns" value="Expressed in adult middle midgut class I enteroendocrine cell in adult midgut (Drosophila) and 178 other cell types or tissues"/>
</dbReference>
<dbReference type="GO" id="GO:0005786">
    <property type="term" value="C:signal recognition particle, endoplasmic reticulum targeting"/>
    <property type="evidence" value="ECO:0000318"/>
    <property type="project" value="GO_Central"/>
</dbReference>
<dbReference type="GO" id="GO:0008312">
    <property type="term" value="F:7S RNA binding"/>
    <property type="evidence" value="ECO:0007669"/>
    <property type="project" value="InterPro"/>
</dbReference>
<dbReference type="GO" id="GO:0045900">
    <property type="term" value="P:negative regulation of translational elongation"/>
    <property type="evidence" value="ECO:0007669"/>
    <property type="project" value="InterPro"/>
</dbReference>
<dbReference type="GO" id="GO:0006614">
    <property type="term" value="P:SRP-dependent cotranslational protein targeting to membrane"/>
    <property type="evidence" value="ECO:0000318"/>
    <property type="project" value="GO_Central"/>
</dbReference>
<dbReference type="FunFam" id="3.30.720.10:FF:000001">
    <property type="entry name" value="Signal recognition particle 9 kDa protein"/>
    <property type="match status" value="1"/>
</dbReference>
<dbReference type="Gene3D" id="3.30.720.10">
    <property type="entry name" value="Signal recognition particle alu RNA binding heterodimer, srp9/1"/>
    <property type="match status" value="1"/>
</dbReference>
<dbReference type="InterPro" id="IPR009018">
    <property type="entry name" value="Signal_recog_particle_SRP9/14"/>
</dbReference>
<dbReference type="InterPro" id="IPR008832">
    <property type="entry name" value="SRP9"/>
</dbReference>
<dbReference type="InterPro" id="IPR039914">
    <property type="entry name" value="SRP9-like"/>
</dbReference>
<dbReference type="InterPro" id="IPR039432">
    <property type="entry name" value="SRP9_dom"/>
</dbReference>
<dbReference type="PANTHER" id="PTHR12834">
    <property type="entry name" value="SIGNAL RECOGNITION PARTICLE 9 KDA PROTEIN"/>
    <property type="match status" value="1"/>
</dbReference>
<dbReference type="PANTHER" id="PTHR12834:SF12">
    <property type="entry name" value="SIGNAL RECOGNITION PARTICLE 9 KDA PROTEIN"/>
    <property type="match status" value="1"/>
</dbReference>
<dbReference type="Pfam" id="PF05486">
    <property type="entry name" value="SRP9-21"/>
    <property type="match status" value="1"/>
</dbReference>
<dbReference type="PIRSF" id="PIRSF017029">
    <property type="entry name" value="Signal_recog_particle_SRP9"/>
    <property type="match status" value="1"/>
</dbReference>
<dbReference type="SUPFAM" id="SSF54762">
    <property type="entry name" value="Signal recognition particle alu RNA binding heterodimer, SRP9/14"/>
    <property type="match status" value="1"/>
</dbReference>
<protein>
    <recommendedName>
        <fullName>Signal recognition particle 9 kDa protein</fullName>
        <shortName>SRP9</shortName>
    </recommendedName>
</protein>
<keyword id="KW-0963">Cytoplasm</keyword>
<keyword id="KW-1185">Reference proteome</keyword>
<keyword id="KW-0687">Ribonucleoprotein</keyword>
<keyword id="KW-0694">RNA-binding</keyword>
<keyword id="KW-0733">Signal recognition particle</keyword>
<evidence type="ECO:0000250" key="1"/>
<evidence type="ECO:0000250" key="2">
    <source>
        <dbReference type="UniProtKB" id="P21262"/>
    </source>
</evidence>
<evidence type="ECO:0000250" key="3">
    <source>
        <dbReference type="UniProtKB" id="P49458"/>
    </source>
</evidence>
<evidence type="ECO:0000305" key="4"/>
<organism>
    <name type="scientific">Drosophila melanogaster</name>
    <name type="common">Fruit fly</name>
    <dbReference type="NCBI Taxonomy" id="7227"/>
    <lineage>
        <taxon>Eukaryota</taxon>
        <taxon>Metazoa</taxon>
        <taxon>Ecdysozoa</taxon>
        <taxon>Arthropoda</taxon>
        <taxon>Hexapoda</taxon>
        <taxon>Insecta</taxon>
        <taxon>Pterygota</taxon>
        <taxon>Neoptera</taxon>
        <taxon>Endopterygota</taxon>
        <taxon>Diptera</taxon>
        <taxon>Brachycera</taxon>
        <taxon>Muscomorpha</taxon>
        <taxon>Ephydroidea</taxon>
        <taxon>Drosophilidae</taxon>
        <taxon>Drosophila</taxon>
        <taxon>Sophophora</taxon>
    </lineage>
</organism>
<name>SRP09_DROME</name>